<feature type="chain" id="PRO_0000190583" description="4-hydroxy-3-methylbut-2-en-1-yl diphosphate synthase (flavodoxin)">
    <location>
        <begin position="1"/>
        <end position="381"/>
    </location>
</feature>
<feature type="binding site" evidence="1">
    <location>
        <position position="273"/>
    </location>
    <ligand>
        <name>[4Fe-4S] cluster</name>
        <dbReference type="ChEBI" id="CHEBI:49883"/>
    </ligand>
</feature>
<feature type="binding site" evidence="1">
    <location>
        <position position="276"/>
    </location>
    <ligand>
        <name>[4Fe-4S] cluster</name>
        <dbReference type="ChEBI" id="CHEBI:49883"/>
    </ligand>
</feature>
<feature type="binding site" evidence="1">
    <location>
        <position position="308"/>
    </location>
    <ligand>
        <name>[4Fe-4S] cluster</name>
        <dbReference type="ChEBI" id="CHEBI:49883"/>
    </ligand>
</feature>
<feature type="binding site" evidence="1">
    <location>
        <position position="315"/>
    </location>
    <ligand>
        <name>[4Fe-4S] cluster</name>
        <dbReference type="ChEBI" id="CHEBI:49883"/>
    </ligand>
</feature>
<sequence>MSSYRPYQHIERRKSRQIHVGKVAVGGDAPISVQTMTNTLTSDAQATIEQIRRAELAGVDIVRVSCPDEASTAALEEIVREVNVPIVADIHFHYKRAIEAAKAGAACLRINPGNIGSAERVREVVNAARDYGCSIRIGVNAGSLEKHLLEKYGEPNPEALVESALEHAKILEDHDFHEFKISVKASDVFMAVAAYQQLADCCDHPLHIGITEAGSKRAGTVKSSIGLGNLLWAGVGDTMRVSLSAAPEEEVLVGWDILKSLGLRHRGVKIISCPSCARQGFNVVETVQTLEDRLQHIKTPLTLSIIGCVVNGPGEALMTDIGVTGGGNGRHMVYAAGRQDHTMPAGDMIEHIVELVEKKVSDIEAGKVEASTAKQMDPAAS</sequence>
<proteinExistence type="inferred from homology"/>
<name>ISPG_GLUOX</name>
<protein>
    <recommendedName>
        <fullName evidence="1">4-hydroxy-3-methylbut-2-en-1-yl diphosphate synthase (flavodoxin)</fullName>
        <ecNumber evidence="1">1.17.7.3</ecNumber>
    </recommendedName>
    <alternativeName>
        <fullName evidence="1">1-hydroxy-2-methyl-2-(E)-butenyl 4-diphosphate synthase</fullName>
    </alternativeName>
</protein>
<accession>Q5FUR7</accession>
<reference key="1">
    <citation type="journal article" date="2005" name="Nat. Biotechnol.">
        <title>Complete genome sequence of the acetic acid bacterium Gluconobacter oxydans.</title>
        <authorList>
            <person name="Prust C."/>
            <person name="Hoffmeister M."/>
            <person name="Liesegang H."/>
            <person name="Wiezer A."/>
            <person name="Fricke W.F."/>
            <person name="Ehrenreich A."/>
            <person name="Gottschalk G."/>
            <person name="Deppenmeier U."/>
        </authorList>
    </citation>
    <scope>NUCLEOTIDE SEQUENCE [LARGE SCALE GENOMIC DNA]</scope>
    <source>
        <strain>621H</strain>
    </source>
</reference>
<organism>
    <name type="scientific">Gluconobacter oxydans (strain 621H)</name>
    <name type="common">Gluconobacter suboxydans</name>
    <dbReference type="NCBI Taxonomy" id="290633"/>
    <lineage>
        <taxon>Bacteria</taxon>
        <taxon>Pseudomonadati</taxon>
        <taxon>Pseudomonadota</taxon>
        <taxon>Alphaproteobacteria</taxon>
        <taxon>Acetobacterales</taxon>
        <taxon>Acetobacteraceae</taxon>
        <taxon>Gluconobacter</taxon>
    </lineage>
</organism>
<evidence type="ECO:0000255" key="1">
    <source>
        <dbReference type="HAMAP-Rule" id="MF_00159"/>
    </source>
</evidence>
<keyword id="KW-0004">4Fe-4S</keyword>
<keyword id="KW-0408">Iron</keyword>
<keyword id="KW-0411">Iron-sulfur</keyword>
<keyword id="KW-0414">Isoprene biosynthesis</keyword>
<keyword id="KW-0479">Metal-binding</keyword>
<keyword id="KW-0560">Oxidoreductase</keyword>
<keyword id="KW-1185">Reference proteome</keyword>
<gene>
    <name evidence="1" type="primary">ispG</name>
    <name type="ordered locus">GOX0034</name>
</gene>
<comment type="function">
    <text evidence="1">Converts 2C-methyl-D-erythritol 2,4-cyclodiphosphate (ME-2,4cPP) into 1-hydroxy-2-methyl-2-(E)-butenyl 4-diphosphate.</text>
</comment>
<comment type="catalytic activity">
    <reaction evidence="1">
        <text>(2E)-4-hydroxy-3-methylbut-2-enyl diphosphate + oxidized [flavodoxin] + H2O + 2 H(+) = 2-C-methyl-D-erythritol 2,4-cyclic diphosphate + reduced [flavodoxin]</text>
        <dbReference type="Rhea" id="RHEA:43604"/>
        <dbReference type="Rhea" id="RHEA-COMP:10622"/>
        <dbReference type="Rhea" id="RHEA-COMP:10623"/>
        <dbReference type="ChEBI" id="CHEBI:15377"/>
        <dbReference type="ChEBI" id="CHEBI:15378"/>
        <dbReference type="ChEBI" id="CHEBI:57618"/>
        <dbReference type="ChEBI" id="CHEBI:58210"/>
        <dbReference type="ChEBI" id="CHEBI:58483"/>
        <dbReference type="ChEBI" id="CHEBI:128753"/>
        <dbReference type="EC" id="1.17.7.3"/>
    </reaction>
</comment>
<comment type="cofactor">
    <cofactor evidence="1">
        <name>[4Fe-4S] cluster</name>
        <dbReference type="ChEBI" id="CHEBI:49883"/>
    </cofactor>
    <text evidence="1">Binds 1 [4Fe-4S] cluster.</text>
</comment>
<comment type="pathway">
    <text evidence="1">Isoprenoid biosynthesis; isopentenyl diphosphate biosynthesis via DXP pathway; isopentenyl diphosphate from 1-deoxy-D-xylulose 5-phosphate: step 5/6.</text>
</comment>
<comment type="similarity">
    <text evidence="1">Belongs to the IspG family.</text>
</comment>
<dbReference type="EC" id="1.17.7.3" evidence="1"/>
<dbReference type="EMBL" id="CP000009">
    <property type="protein sequence ID" value="AAW59832.1"/>
    <property type="molecule type" value="Genomic_DNA"/>
</dbReference>
<dbReference type="RefSeq" id="WP_011251636.1">
    <property type="nucleotide sequence ID" value="NZ_LT900338.1"/>
</dbReference>
<dbReference type="SMR" id="Q5FUR7"/>
<dbReference type="STRING" id="290633.GOX0034"/>
<dbReference type="KEGG" id="gox:GOX0034"/>
<dbReference type="eggNOG" id="COG0821">
    <property type="taxonomic scope" value="Bacteria"/>
</dbReference>
<dbReference type="HOGENOM" id="CLU_042258_0_0_5"/>
<dbReference type="UniPathway" id="UPA00056">
    <property type="reaction ID" value="UER00096"/>
</dbReference>
<dbReference type="Proteomes" id="UP000006375">
    <property type="component" value="Chromosome"/>
</dbReference>
<dbReference type="GO" id="GO:0051539">
    <property type="term" value="F:4 iron, 4 sulfur cluster binding"/>
    <property type="evidence" value="ECO:0007669"/>
    <property type="project" value="UniProtKB-UniRule"/>
</dbReference>
<dbReference type="GO" id="GO:0046429">
    <property type="term" value="F:4-hydroxy-3-methylbut-2-en-1-yl diphosphate synthase activity (ferredoxin)"/>
    <property type="evidence" value="ECO:0007669"/>
    <property type="project" value="UniProtKB-UniRule"/>
</dbReference>
<dbReference type="GO" id="GO:0141197">
    <property type="term" value="F:4-hydroxy-3-methylbut-2-enyl-diphosphate synthase activity (flavodoxin)"/>
    <property type="evidence" value="ECO:0007669"/>
    <property type="project" value="UniProtKB-EC"/>
</dbReference>
<dbReference type="GO" id="GO:0005506">
    <property type="term" value="F:iron ion binding"/>
    <property type="evidence" value="ECO:0007669"/>
    <property type="project" value="InterPro"/>
</dbReference>
<dbReference type="GO" id="GO:0019288">
    <property type="term" value="P:isopentenyl diphosphate biosynthetic process, methylerythritol 4-phosphate pathway"/>
    <property type="evidence" value="ECO:0007669"/>
    <property type="project" value="UniProtKB-UniRule"/>
</dbReference>
<dbReference type="GO" id="GO:0016114">
    <property type="term" value="P:terpenoid biosynthetic process"/>
    <property type="evidence" value="ECO:0007669"/>
    <property type="project" value="InterPro"/>
</dbReference>
<dbReference type="FunFam" id="3.20.20.20:FF:000001">
    <property type="entry name" value="4-hydroxy-3-methylbut-2-en-1-yl diphosphate synthase (flavodoxin)"/>
    <property type="match status" value="1"/>
</dbReference>
<dbReference type="Gene3D" id="3.20.20.20">
    <property type="entry name" value="Dihydropteroate synthase-like"/>
    <property type="match status" value="1"/>
</dbReference>
<dbReference type="Gene3D" id="3.30.413.10">
    <property type="entry name" value="Sulfite Reductase Hemoprotein, domain 1"/>
    <property type="match status" value="1"/>
</dbReference>
<dbReference type="HAMAP" id="MF_00159">
    <property type="entry name" value="IspG"/>
    <property type="match status" value="1"/>
</dbReference>
<dbReference type="InterPro" id="IPR011005">
    <property type="entry name" value="Dihydropteroate_synth-like_sf"/>
</dbReference>
<dbReference type="InterPro" id="IPR016425">
    <property type="entry name" value="IspG_bac"/>
</dbReference>
<dbReference type="InterPro" id="IPR004588">
    <property type="entry name" value="IspG_bac-typ"/>
</dbReference>
<dbReference type="InterPro" id="IPR045854">
    <property type="entry name" value="NO2/SO3_Rdtase_4Fe4S_sf"/>
</dbReference>
<dbReference type="NCBIfam" id="TIGR00612">
    <property type="entry name" value="ispG_gcpE"/>
    <property type="match status" value="1"/>
</dbReference>
<dbReference type="NCBIfam" id="NF001540">
    <property type="entry name" value="PRK00366.1"/>
    <property type="match status" value="1"/>
</dbReference>
<dbReference type="PANTHER" id="PTHR30454">
    <property type="entry name" value="4-HYDROXY-3-METHYLBUT-2-EN-1-YL DIPHOSPHATE SYNTHASE"/>
    <property type="match status" value="1"/>
</dbReference>
<dbReference type="PANTHER" id="PTHR30454:SF0">
    <property type="entry name" value="4-HYDROXY-3-METHYLBUT-2-EN-1-YL DIPHOSPHATE SYNTHASE (FERREDOXIN), CHLOROPLASTIC"/>
    <property type="match status" value="1"/>
</dbReference>
<dbReference type="Pfam" id="PF04551">
    <property type="entry name" value="GcpE"/>
    <property type="match status" value="1"/>
</dbReference>
<dbReference type="PIRSF" id="PIRSF004640">
    <property type="entry name" value="IspG"/>
    <property type="match status" value="1"/>
</dbReference>
<dbReference type="SUPFAM" id="SSF51412">
    <property type="entry name" value="Inosine monophosphate dehydrogenase (IMPDH)"/>
    <property type="match status" value="1"/>
</dbReference>
<dbReference type="SUPFAM" id="SSF56014">
    <property type="entry name" value="Nitrite and sulphite reductase 4Fe-4S domain-like"/>
    <property type="match status" value="1"/>
</dbReference>